<comment type="function">
    <text evidence="1 4 6 7 8 11 12 13 15 18 19">Plays an essential role in both canonical and non-canonical autophagy: interacts with ATG12-ATG5 to mediate the lipidation to ATG8 family proteins (MAP1LC3A, MAP1LC3B, MAP1LC3C, GABARAPL1, GABARAPL2 and GABARAP) (PubMed:12665549, PubMed:18849966, PubMed:19898471, PubMed:23392225, PubMed:24553140, PubMed:24954904, PubMed:33586810). Acts as a molecular hub, coordinating autophagy pathways via distinct domains that support either canonical or non-canonical signaling (PubMed:33586810). During canonical autophagy, interacts with ATG12-ATG5 to mediate the conjugation of phosphatidylethanolamine (PE) to ATG8 proteins, to produce a membrane-bound activated form of ATG8 (By similarity). Thereby, controls the elongation of the nascent autophagosomal membrane (By similarity). As part of the ATG8 conjugation system with ATG5 and ATG12, required for recruitment of LRRK2 to stressed lysosomes and induction of LRRK2 kinase activity in response to lysosomal stress (PubMed:38227290). Also involved in non-canonical autophagy, a parallel pathway involving conjugation of ATG8 proteins to single membranes at endolysosomal compartments, probably by catalyzing conjugation of phosphatidylserine (PS) to ATG8 (By similarity). Non-canonical autophagy plays a key role in epithelial cells to limit lethal infection by influenza A (IAV) virus (PubMed:33586810). Regulates mitochondrial antiviral signaling (MAVS)-dependent type I interferon (IFN-I) production (By similarity). Negatively regulates NOD1- and NOD2-driven inflammatory cytokine response (PubMed:24238340). Instead, promotes an autophagy-dependent antibacterial pathway together with NOD1 or NOD2 (PubMed:19898471, PubMed:19966812, PubMed:24238340). Plays a role in regulating morphology and function of Paneth cell (By similarity).</text>
</comment>
<comment type="subunit">
    <text evidence="1 4 5 7 9 10 11 15 16 17">Homodimer (By similarity). Homooligomer (PubMed:12665549). Heterooligomer with ATG16L2 (PubMed:22082872). Interacts with WIPI1 (By similarity). Interacts with WIPI2 (PubMed:24954904). Interacts with RB1CC1; the interaction is required for ULK1 complex-dependent autophagy (PubMed:23262492, PubMed:23392225). Interacts with ATG5 (PubMed:12665549). Part of the minor complex composed of 4 sets of ATG12-ATG5 and ATG16L1 (400 kDa); this complex interacts with ATG3 leading to disruption of ATG7 interaction and promotion of ATG8-like proteins lipidation (By similarity). Part of the major complex composed of 8 sets of ATG12-ATG5 and ATG16L1 (800 kDa) (By similarity). Interacts with RAB33B (GTP- and GDP-bound forms); the complex consists of a tetramer where two RAB33B molecules bind independently one molecule of the ATG16L1 homodimer; the interaction promotes ATG12-ATG5-ATG16L1 complex recruitment to phagophores (PubMed:18448665, PubMed:32960676). Interacts (via WD repeats) with TMEM59; the interaction mediates unconventional autophagic activity of TMEM59 (By similarity). Interacts with TLR2 (By similarity). Interacts (via WD repeats) with MEFV (By similarity). Interacts (via N-terminal) with CLTC (By similarity). Interacts with NOD1 (PubMed:19898471). Interacts with NOD2 (PubMed:19898471, PubMed:19966812). Interacts with TUFM (By similarity). Interacts with TRIM16 (By similarity). Interacts (via WD repeats) with SPATA33 (PubMed:33087875). Interacts with Irgm1 (By similarity).</text>
</comment>
<comment type="interaction">
    <interactant intactId="EBI-769195">
        <id>Q8C0J2</id>
    </interactant>
    <interactant intactId="EBI-2911848">
        <id>Q99J83</id>
        <label>Atg5</label>
    </interactant>
    <organismsDiffer>false</organismsDiffer>
    <experiments>4</experiments>
</comment>
<comment type="interaction">
    <interactant intactId="EBI-769195">
        <id>Q8C0J2</id>
    </interactant>
    <interactant intactId="EBI-298630">
        <id>P23242</id>
        <label>Gja1</label>
    </interactant>
    <organismsDiffer>false</organismsDiffer>
    <experiments>2</experiments>
</comment>
<comment type="interaction">
    <interactant intactId="EBI-769195">
        <id>Q8C0J2</id>
    </interactant>
    <interactant intactId="EBI-16077253">
        <id>Q61025</id>
        <label>Ift20</label>
    </interactant>
    <organismsDiffer>false</organismsDiffer>
    <experiments>2</experiments>
</comment>
<comment type="interaction">
    <interactant intactId="EBI-769195">
        <id>Q8C0J2</id>
    </interactant>
    <interactant intactId="EBI-647302">
        <id>Q9ESK9</id>
        <label>Rb1cc1</label>
    </interactant>
    <organismsDiffer>false</organismsDiffer>
    <experiments>4</experiments>
</comment>
<comment type="interaction">
    <interactant intactId="EBI-11580812">
        <id>Q8C0J2-2</id>
    </interactant>
    <interactant intactId="EBI-11580812">
        <id>Q8C0J2-2</id>
        <label>Atg16l1</label>
    </interactant>
    <organismsDiffer>false</organismsDiffer>
    <experiments>2</experiments>
</comment>
<comment type="interaction">
    <interactant intactId="EBI-16029274">
        <id>Q8C0J2-3</id>
    </interactant>
    <interactant intactId="EBI-647302">
        <id>Q9ESK9</id>
        <label>Rb1cc1</label>
    </interactant>
    <organismsDiffer>false</organismsDiffer>
    <experiments>3</experiments>
</comment>
<comment type="interaction">
    <interactant intactId="EBI-16029274">
        <id>Q8C0J2-3</id>
    </interactant>
    <interactant intactId="EBI-1047414">
        <id>Q9H1Y0</id>
        <label>ATG5</label>
    </interactant>
    <organismsDiffer>true</organismsDiffer>
    <experiments>2</experiments>
</comment>
<comment type="interaction">
    <interactant intactId="EBI-16029274">
        <id>Q8C0J2-3</id>
    </interactant>
    <interactant intactId="EBI-1047793">
        <id>Q8TDY2</id>
        <label>RB1CC1</label>
    </interactant>
    <organismsDiffer>true</organismsDiffer>
    <experiments>6</experiments>
</comment>
<comment type="subcellular location">
    <subcellularLocation>
        <location evidence="17">Cytoplasm</location>
    </subcellularLocation>
    <subcellularLocation>
        <location evidence="15">Preautophagosomal structure membrane</location>
        <topology evidence="25">Peripheral membrane protein</topology>
    </subcellularLocation>
    <subcellularLocation>
        <location evidence="1">Endosome membrane</location>
        <topology evidence="25">Peripheral membrane protein</topology>
    </subcellularLocation>
    <subcellularLocation>
        <location evidence="1">Lysosome membrane</location>
        <topology evidence="25">Peripheral membrane protein</topology>
    </subcellularLocation>
    <text evidence="1 15">Recruited to omegasomes membranes by WIPI2 (PubMed:24954904). Omegasomes are endoplasmic reticulum connected strutures at the origin of preautophagosomal structures. Localized to preautophagosomal structure (PAS) where it is involved in the membrane targeting of ATG5 (PubMed:24954904). Localizes also to discrete punctae along the ciliary axoneme (PubMed:24954904). Upon activation of non-canonical autophagy, recruited to single-membrane endolysosomal compartments (By similarity). Under starved conditions, the ATG12-ATG5-ATG16L1 complex is translocated to phagophores driven by RAB33B (By similarity).</text>
</comment>
<comment type="alternative products">
    <event type="alternative splicing"/>
    <isoform>
        <id>Q8C0J2-1</id>
        <name>1</name>
        <name evidence="20">Apg16Lbeta</name>
        <sequence type="displayed"/>
    </isoform>
    <isoform>
        <id>Q8C0J2-2</id>
        <name>2</name>
        <name evidence="20">Apg16Lalpha</name>
        <sequence type="described" ref="VSP_013391"/>
    </isoform>
    <isoform>
        <id>Q8C0J2-3</id>
        <name>3</name>
        <name evidence="20">Apg16Lgamma</name>
        <sequence type="described" ref="VSP_013392"/>
    </isoform>
    <isoform>
        <id>Q8C0J2-4</id>
        <name>4</name>
        <sequence type="described" ref="VSP_013392 VSP_013394 VSP_013395"/>
    </isoform>
    <isoform>
        <id>Q8C0J2-5</id>
        <name>5</name>
        <sequence type="described" ref="VSP_013391 VSP_013393"/>
    </isoform>
</comment>
<comment type="tissue specificity">
    <text evidence="4 17">Widely expressed (PubMed:12665549). Expressed in the testis and sperm midpiece (at protein level) (PubMed:33087875).</text>
</comment>
<comment type="tissue specificity">
    <molecule>Isoform 1</molecule>
    <text evidence="4">Expressed in liver.</text>
</comment>
<comment type="tissue specificity">
    <molecule>Isoform 2</molecule>
    <text evidence="4">Highly expressed in liver.</text>
</comment>
<comment type="tissue specificity">
    <molecule>Isoform 3</molecule>
    <text evidence="4">Expressed in brain.</text>
</comment>
<comment type="domain">
    <text evidence="1 19">The WD repeats are required for non-canonical autophagy but not for canonical autophagy (By similarity). The WD repeats are required for the recruitment of LRRK2 to stressed lysosomes (PubMed:38227290).</text>
</comment>
<comment type="PTM">
    <text evidence="13">Proteolytic cleavage by activated CASP3 leads to degradation and may regulate autophagy upon cellular stress and apoptotic stimuli.</text>
</comment>
<comment type="PTM">
    <text evidence="1">Phosphorylation at Ser-139 promotes association with the ATG12-ATG5 conjugate to form the ATG12-ATG5-ATG16L1 complex.</text>
</comment>
<comment type="similarity">
    <text evidence="25">Belongs to the WD repeat ATG16 family.</text>
</comment>
<comment type="sequence caution" evidence="25">
    <conflict type="erroneous initiation">
        <sequence resource="EMBL-CDS" id="BAD21370"/>
    </conflict>
    <text>Extended N-terminus.</text>
</comment>
<keyword id="KW-0002">3D-structure</keyword>
<keyword id="KW-0025">Alternative splicing</keyword>
<keyword id="KW-0072">Autophagy</keyword>
<keyword id="KW-0175">Coiled coil</keyword>
<keyword id="KW-0963">Cytoplasm</keyword>
<keyword id="KW-0967">Endosome</keyword>
<keyword id="KW-0458">Lysosome</keyword>
<keyword id="KW-0472">Membrane</keyword>
<keyword id="KW-0597">Phosphoprotein</keyword>
<keyword id="KW-0653">Protein transport</keyword>
<keyword id="KW-1185">Reference proteome</keyword>
<keyword id="KW-0677">Repeat</keyword>
<keyword id="KW-0813">Transport</keyword>
<keyword id="KW-0853">WD repeat</keyword>
<reference key="1">
    <citation type="journal article" date="2003" name="J. Cell Sci.">
        <title>Mouse Apg16L, a novel WD-repeat protein, targets to the autophagic isolation membrane with the Apg12-Apg5 conjugate.</title>
        <authorList>
            <person name="Mizushima N."/>
            <person name="Kuma A."/>
            <person name="Kobayashi Y."/>
            <person name="Yamamoto A."/>
            <person name="Matsubae M."/>
            <person name="Takao T."/>
            <person name="Natsume T."/>
            <person name="Ohsumi Y."/>
            <person name="Yoshimori T."/>
        </authorList>
    </citation>
    <scope>NUCLEOTIDE SEQUENCE [MRNA] (ISOFORMS 1; 2 AND 3)</scope>
    <scope>FUNCTION</scope>
    <scope>TISSUE SPECIFICITY</scope>
    <scope>SUBCELLULAR LOCATION</scope>
    <scope>INTERACTION WITH ATG5</scope>
    <scope>SUBUNIT</scope>
</reference>
<reference key="2">
    <citation type="journal article" date="2005" name="Science">
        <title>The transcriptional landscape of the mammalian genome.</title>
        <authorList>
            <person name="Carninci P."/>
            <person name="Kasukawa T."/>
            <person name="Katayama S."/>
            <person name="Gough J."/>
            <person name="Frith M.C."/>
            <person name="Maeda N."/>
            <person name="Oyama R."/>
            <person name="Ravasi T."/>
            <person name="Lenhard B."/>
            <person name="Wells C."/>
            <person name="Kodzius R."/>
            <person name="Shimokawa K."/>
            <person name="Bajic V.B."/>
            <person name="Brenner S.E."/>
            <person name="Batalov S."/>
            <person name="Forrest A.R."/>
            <person name="Zavolan M."/>
            <person name="Davis M.J."/>
            <person name="Wilming L.G."/>
            <person name="Aidinis V."/>
            <person name="Allen J.E."/>
            <person name="Ambesi-Impiombato A."/>
            <person name="Apweiler R."/>
            <person name="Aturaliya R.N."/>
            <person name="Bailey T.L."/>
            <person name="Bansal M."/>
            <person name="Baxter L."/>
            <person name="Beisel K.W."/>
            <person name="Bersano T."/>
            <person name="Bono H."/>
            <person name="Chalk A.M."/>
            <person name="Chiu K.P."/>
            <person name="Choudhary V."/>
            <person name="Christoffels A."/>
            <person name="Clutterbuck D.R."/>
            <person name="Crowe M.L."/>
            <person name="Dalla E."/>
            <person name="Dalrymple B.P."/>
            <person name="de Bono B."/>
            <person name="Della Gatta G."/>
            <person name="di Bernardo D."/>
            <person name="Down T."/>
            <person name="Engstrom P."/>
            <person name="Fagiolini M."/>
            <person name="Faulkner G."/>
            <person name="Fletcher C.F."/>
            <person name="Fukushima T."/>
            <person name="Furuno M."/>
            <person name="Futaki S."/>
            <person name="Gariboldi M."/>
            <person name="Georgii-Hemming P."/>
            <person name="Gingeras T.R."/>
            <person name="Gojobori T."/>
            <person name="Green R.E."/>
            <person name="Gustincich S."/>
            <person name="Harbers M."/>
            <person name="Hayashi Y."/>
            <person name="Hensch T.K."/>
            <person name="Hirokawa N."/>
            <person name="Hill D."/>
            <person name="Huminiecki L."/>
            <person name="Iacono M."/>
            <person name="Ikeo K."/>
            <person name="Iwama A."/>
            <person name="Ishikawa T."/>
            <person name="Jakt M."/>
            <person name="Kanapin A."/>
            <person name="Katoh M."/>
            <person name="Kawasawa Y."/>
            <person name="Kelso J."/>
            <person name="Kitamura H."/>
            <person name="Kitano H."/>
            <person name="Kollias G."/>
            <person name="Krishnan S.P."/>
            <person name="Kruger A."/>
            <person name="Kummerfeld S.K."/>
            <person name="Kurochkin I.V."/>
            <person name="Lareau L.F."/>
            <person name="Lazarevic D."/>
            <person name="Lipovich L."/>
            <person name="Liu J."/>
            <person name="Liuni S."/>
            <person name="McWilliam S."/>
            <person name="Madan Babu M."/>
            <person name="Madera M."/>
            <person name="Marchionni L."/>
            <person name="Matsuda H."/>
            <person name="Matsuzawa S."/>
            <person name="Miki H."/>
            <person name="Mignone F."/>
            <person name="Miyake S."/>
            <person name="Morris K."/>
            <person name="Mottagui-Tabar S."/>
            <person name="Mulder N."/>
            <person name="Nakano N."/>
            <person name="Nakauchi H."/>
            <person name="Ng P."/>
            <person name="Nilsson R."/>
            <person name="Nishiguchi S."/>
            <person name="Nishikawa S."/>
            <person name="Nori F."/>
            <person name="Ohara O."/>
            <person name="Okazaki Y."/>
            <person name="Orlando V."/>
            <person name="Pang K.C."/>
            <person name="Pavan W.J."/>
            <person name="Pavesi G."/>
            <person name="Pesole G."/>
            <person name="Petrovsky N."/>
            <person name="Piazza S."/>
            <person name="Reed J."/>
            <person name="Reid J.F."/>
            <person name="Ring B.Z."/>
            <person name="Ringwald M."/>
            <person name="Rost B."/>
            <person name="Ruan Y."/>
            <person name="Salzberg S.L."/>
            <person name="Sandelin A."/>
            <person name="Schneider C."/>
            <person name="Schoenbach C."/>
            <person name="Sekiguchi K."/>
            <person name="Semple C.A."/>
            <person name="Seno S."/>
            <person name="Sessa L."/>
            <person name="Sheng Y."/>
            <person name="Shibata Y."/>
            <person name="Shimada H."/>
            <person name="Shimada K."/>
            <person name="Silva D."/>
            <person name="Sinclair B."/>
            <person name="Sperling S."/>
            <person name="Stupka E."/>
            <person name="Sugiura K."/>
            <person name="Sultana R."/>
            <person name="Takenaka Y."/>
            <person name="Taki K."/>
            <person name="Tammoja K."/>
            <person name="Tan S.L."/>
            <person name="Tang S."/>
            <person name="Taylor M.S."/>
            <person name="Tegner J."/>
            <person name="Teichmann S.A."/>
            <person name="Ueda H.R."/>
            <person name="van Nimwegen E."/>
            <person name="Verardo R."/>
            <person name="Wei C.L."/>
            <person name="Yagi K."/>
            <person name="Yamanishi H."/>
            <person name="Zabarovsky E."/>
            <person name="Zhu S."/>
            <person name="Zimmer A."/>
            <person name="Hide W."/>
            <person name="Bult C."/>
            <person name="Grimmond S.M."/>
            <person name="Teasdale R.D."/>
            <person name="Liu E.T."/>
            <person name="Brusic V."/>
            <person name="Quackenbush J."/>
            <person name="Wahlestedt C."/>
            <person name="Mattick J.S."/>
            <person name="Hume D.A."/>
            <person name="Kai C."/>
            <person name="Sasaki D."/>
            <person name="Tomaru Y."/>
            <person name="Fukuda S."/>
            <person name="Kanamori-Katayama M."/>
            <person name="Suzuki M."/>
            <person name="Aoki J."/>
            <person name="Arakawa T."/>
            <person name="Iida J."/>
            <person name="Imamura K."/>
            <person name="Itoh M."/>
            <person name="Kato T."/>
            <person name="Kawaji H."/>
            <person name="Kawagashira N."/>
            <person name="Kawashima T."/>
            <person name="Kojima M."/>
            <person name="Kondo S."/>
            <person name="Konno H."/>
            <person name="Nakano K."/>
            <person name="Ninomiya N."/>
            <person name="Nishio T."/>
            <person name="Okada M."/>
            <person name="Plessy C."/>
            <person name="Shibata K."/>
            <person name="Shiraki T."/>
            <person name="Suzuki S."/>
            <person name="Tagami M."/>
            <person name="Waki K."/>
            <person name="Watahiki A."/>
            <person name="Okamura-Oho Y."/>
            <person name="Suzuki H."/>
            <person name="Kawai J."/>
            <person name="Hayashizaki Y."/>
        </authorList>
    </citation>
    <scope>NUCLEOTIDE SEQUENCE [LARGE SCALE MRNA] (ISOFORMS 1 AND 4)</scope>
    <source>
        <strain>C57BL/6J</strain>
        <tissue>Cerebellum</tissue>
        <tissue>Thymus</tissue>
    </source>
</reference>
<reference key="3">
    <citation type="journal article" date="2004" name="DNA Res.">
        <title>Prediction of the coding sequences of mouse homologues of FLJ genes: the complete nucleotide sequences of 110 mouse FLJ-homologous cDNAs identified by screening of terminal sequences of cDNA clones randomly sampled from size-fractionated libraries.</title>
        <authorList>
            <person name="Okazaki N."/>
            <person name="Kikuno R."/>
            <person name="Ohara R."/>
            <person name="Inamoto S."/>
            <person name="Koseki H."/>
            <person name="Hiraoka S."/>
            <person name="Saga Y."/>
            <person name="Kitamura H."/>
            <person name="Nakagawa T."/>
            <person name="Nagase T."/>
            <person name="Ohara O."/>
            <person name="Koga H."/>
        </authorList>
    </citation>
    <scope>NUCLEOTIDE SEQUENCE [LARGE SCALE MRNA] (ISOFORM 5)</scope>
    <source>
        <tissue>Fetal brain</tissue>
    </source>
</reference>
<reference key="4">
    <citation type="journal article" date="2004" name="Genome Res.">
        <title>The status, quality, and expansion of the NIH full-length cDNA project: the Mammalian Gene Collection (MGC).</title>
        <authorList>
            <consortium name="The MGC Project Team"/>
        </authorList>
    </citation>
    <scope>NUCLEOTIDE SEQUENCE [LARGE SCALE MRNA] (ISOFORM 3)</scope>
    <source>
        <strain>C57BL/6J</strain>
        <tissue>Brain</tissue>
    </source>
</reference>
<reference key="5">
    <citation type="journal article" date="2008" name="Mol. Biol. Cell">
        <title>Golgi-resident small GTPase Rab33B interacts with Atg16L and modulates autophagosome formation.</title>
        <authorList>
            <person name="Itoh T."/>
            <person name="Fujita N."/>
            <person name="Kanno E."/>
            <person name="Yamamoto A."/>
            <person name="Yoshimori T."/>
            <person name="Fukuda M."/>
        </authorList>
    </citation>
    <scope>INTERACTION WITH RAB33B</scope>
</reference>
<reference key="6">
    <citation type="journal article" date="2008" name="Nature">
        <title>A key role for autophagy and the autophagy gene Atg16l1 in mouse and human intestinal Paneth cells.</title>
        <authorList>
            <person name="Cadwell K."/>
            <person name="Liu J.Y."/>
            <person name="Brown S.L."/>
            <person name="Miyoshi H."/>
            <person name="Loh J."/>
            <person name="Lennerz J.K."/>
            <person name="Kishi C."/>
            <person name="Kc W."/>
            <person name="Carrero J.A."/>
            <person name="Hunt S."/>
            <person name="Stone C.D."/>
            <person name="Brunt E.M."/>
            <person name="Xavier R.J."/>
            <person name="Sleckman B.P."/>
            <person name="Li E."/>
            <person name="Mizushima N."/>
            <person name="Stappenbeck T.S."/>
            <person name="Virgin H.W. IV"/>
        </authorList>
    </citation>
    <scope>FUNCTION</scope>
</reference>
<reference key="7">
    <citation type="journal article" date="2010" name="Cell">
        <title>A tissue-specific atlas of mouse protein phosphorylation and expression.</title>
        <authorList>
            <person name="Huttlin E.L."/>
            <person name="Jedrychowski M.P."/>
            <person name="Elias J.E."/>
            <person name="Goswami T."/>
            <person name="Rad R."/>
            <person name="Beausoleil S.A."/>
            <person name="Villen J."/>
            <person name="Haas W."/>
            <person name="Sowa M.E."/>
            <person name="Gygi S.P."/>
        </authorList>
    </citation>
    <scope>PHOSPHORYLATION [LARGE SCALE ANALYSIS] AT SER-269 AND SER-287</scope>
    <scope>IDENTIFICATION BY MASS SPECTROMETRY [LARGE SCALE ANALYSIS]</scope>
    <source>
        <tissue>Brain</tissue>
        <tissue>Brown adipose tissue</tissue>
        <tissue>Heart</tissue>
        <tissue>Kidney</tissue>
        <tissue>Liver</tissue>
        <tissue>Lung</tissue>
    </source>
</reference>
<reference key="8">
    <citation type="journal article" date="2010" name="Nat. Immunol.">
        <title>Nod1 and Nod2 direct autophagy by recruiting ATG16L1 to the plasma membrane at the site of bacterial entry.</title>
        <authorList>
            <person name="Travassos L.H."/>
            <person name="Carneiro L.A."/>
            <person name="Ramjeet M."/>
            <person name="Hussey S."/>
            <person name="Kim Y.G."/>
            <person name="Magalhaes J.G."/>
            <person name="Yuan L."/>
            <person name="Soares F."/>
            <person name="Chea E."/>
            <person name="Le Bourhis L."/>
            <person name="Boneca I.G."/>
            <person name="Allaoui A."/>
            <person name="Jones N.L."/>
            <person name="Nunez G."/>
            <person name="Girardin S.E."/>
            <person name="Philpott D.J."/>
        </authorList>
    </citation>
    <scope>FUNCTION</scope>
    <scope>SUBCELLULAR LOCATION</scope>
    <scope>INTERACTION WITH NOD1 AND NOD2</scope>
</reference>
<reference key="9">
    <citation type="journal article" date="2010" name="Nat. Med.">
        <title>NOD2 stimulation induces autophagy in dendritic cells influencing bacterial handling and antigen presentation.</title>
        <authorList>
            <person name="Cooney R."/>
            <person name="Baker J."/>
            <person name="Brain O."/>
            <person name="Danis B."/>
            <person name="Pichulik T."/>
            <person name="Allan P."/>
            <person name="Ferguson D.J."/>
            <person name="Campbell B.J."/>
            <person name="Jewell D."/>
            <person name="Simmons A."/>
        </authorList>
    </citation>
    <scope>FUNCTION</scope>
    <scope>INTERACTION WITH NOD2</scope>
</reference>
<reference key="10">
    <citation type="journal article" date="2011" name="Autophagy">
        <title>Atg16L2, a novel isoform of mammalian Atg16L that is not essential for canonical autophagy despite forming an Atg12-5-16L2 complex.</title>
        <authorList>
            <person name="Ishibashi K."/>
            <person name="Fujita N."/>
            <person name="Kanno E."/>
            <person name="Omori H."/>
            <person name="Yoshimori T."/>
            <person name="Itoh T."/>
            <person name="Fukuda M."/>
        </authorList>
    </citation>
    <scope>SUBUNIT</scope>
</reference>
<reference key="11">
    <citation type="journal article" date="2013" name="EMBO Rep.">
        <title>FIP200 regulates targeting of Atg16L1 to the isolation membrane.</title>
        <authorList>
            <person name="Nishimura T."/>
            <person name="Kaizuka T."/>
            <person name="Cadwell K."/>
            <person name="Sahani M.H."/>
            <person name="Saitoh T."/>
            <person name="Akira S."/>
            <person name="Virgin H.W."/>
            <person name="Mizushima N."/>
        </authorList>
    </citation>
    <scope>FUNCTION</scope>
    <scope>INTERACTION WITH RB1CC1</scope>
</reference>
<reference key="12">
    <citation type="journal article" date="2013" name="Immunity">
        <title>The protein ATG16L1 suppresses inflammatory cytokines induced by the intracellular sensors Nod1 and Nod2 in an autophagy-independent manner.</title>
        <authorList>
            <person name="Sorbara M.T."/>
            <person name="Ellison L.K."/>
            <person name="Ramjeet M."/>
            <person name="Travassos L.H."/>
            <person name="Jones N.L."/>
            <person name="Girardin S.E."/>
            <person name="Philpott D.J."/>
        </authorList>
    </citation>
    <scope>FUNCTION</scope>
</reference>
<reference key="13">
    <citation type="journal article" date="2013" name="Nat. Struct. Mol. Biol.">
        <title>Interaction between FIP200 and ATG16L1 distinguishes ULK1 complex-dependent and -independent autophagy.</title>
        <authorList>
            <person name="Gammoh N."/>
            <person name="Florey O."/>
            <person name="Overholtzer M."/>
            <person name="Jiang X."/>
        </authorList>
    </citation>
    <scope>INTERACTION WITH RB1CC1</scope>
</reference>
<reference key="14">
    <citation type="journal article" date="2013" name="Nature">
        <title>Functional interaction between autophagy and ciliogenesis.</title>
        <authorList>
            <person name="Pampliega O."/>
            <person name="Orhon I."/>
            <person name="Patel B."/>
            <person name="Sridhar S."/>
            <person name="Diaz-Carretero A."/>
            <person name="Beau I."/>
            <person name="Codogno P."/>
            <person name="Satir B.H."/>
            <person name="Satir P."/>
            <person name="Cuervo A.M."/>
        </authorList>
    </citation>
    <scope>SUBCELLULAR LOCATION</scope>
</reference>
<reference key="15">
    <citation type="journal article" date="2014" name="Nature">
        <title>A Crohn's disease variant in Atg16l1 enhances its degradation by caspase 3.</title>
        <authorList>
            <person name="Murthy A."/>
            <person name="Li Y."/>
            <person name="Peng I."/>
            <person name="Reichelt M."/>
            <person name="Katakam A.K."/>
            <person name="Noubade R."/>
            <person name="Roose-Girma M."/>
            <person name="Devoss J."/>
            <person name="Diehl L."/>
            <person name="Graham R.R."/>
            <person name="van Lookeren Campagne M."/>
        </authorList>
    </citation>
    <scope>FUNCTION IN AUTOPHAGY</scope>
    <scope>CLEAVAGE BY CASP3</scope>
    <scope>MUTAGENESIS OF ASP-299 AND THR-300</scope>
</reference>
<reference key="16">
    <citation type="journal article" date="2014" name="Mol. Cell">
        <title>WIPI2 links LC3 conjugation with PI3P, autophagosome formation, and pathogen clearance by recruiting Atg12-5-16L1.</title>
        <authorList>
            <person name="Dooley H.C."/>
            <person name="Razi M."/>
            <person name="Polson H.E."/>
            <person name="Girardin S.E."/>
            <person name="Wilson M.I."/>
            <person name="Tooze S.A."/>
        </authorList>
    </citation>
    <scope>FUNCTION</scope>
    <scope>INTERACTION WITH WIPI2 AND RB1CC1</scope>
    <scope>SUBCELLULAR LOCATION</scope>
</reference>
<reference key="17">
    <citation type="journal article" date="2014" name="Proc. Natl. Acad. Sci. U.S.A.">
        <title>Atg16L1 T300A variant decreases selective autophagy resulting in altered cytokine signaling and decreased antibacterial defense.</title>
        <authorList>
            <person name="Lassen K.G."/>
            <person name="Kuballa P."/>
            <person name="Conway K.L."/>
            <person name="Patel K.K."/>
            <person name="Becker C.E."/>
            <person name="Peloquin J.M."/>
            <person name="Villablanca E.J."/>
            <person name="Norman J.M."/>
            <person name="Liu T.C."/>
            <person name="Heath R.J."/>
            <person name="Becker M.L."/>
            <person name="Fagbami L."/>
            <person name="Horn H."/>
            <person name="Mercer J."/>
            <person name="Yilmaz O.H."/>
            <person name="Jaffe J.D."/>
            <person name="Shamji A.F."/>
            <person name="Bhan A.K."/>
            <person name="Carr S.A."/>
            <person name="Daly M.J."/>
            <person name="Virgin H.W."/>
            <person name="Schreiber S.L."/>
            <person name="Stappenbeck T.S."/>
            <person name="Xavier R.J."/>
        </authorList>
    </citation>
    <scope>MUTAGENESIS OF THR-300</scope>
</reference>
<reference key="18">
    <citation type="journal article" date="2021" name="Cell Death Differ.">
        <title>SPATA33 is an autophagy mediator for cargo selectivity in germline mitophagy.</title>
        <authorList>
            <person name="Zhang Y."/>
            <person name="Xu X."/>
            <person name="Hu M."/>
            <person name="Wang X."/>
            <person name="Cheng H."/>
            <person name="Zhou R."/>
        </authorList>
    </citation>
    <scope>SUBCELLULAR LOCATION</scope>
    <scope>TISSUE SPECIFICITY</scope>
    <scope>INTERACTION WITH SPATA33</scope>
</reference>
<reference key="19">
    <citation type="journal article" date="2021" name="EMBO J.">
        <title>Non-canonical autophagy functions of ATG16L1 in epithelial cells limit lethal infection by influenza A virus.</title>
        <authorList>
            <person name="Wang Y."/>
            <person name="Sharma P."/>
            <person name="Jefferson M."/>
            <person name="Zhang W."/>
            <person name="Bone B."/>
            <person name="Kipar A."/>
            <person name="Bitto D."/>
            <person name="Coombes J.L."/>
            <person name="Pearson T."/>
            <person name="Man A."/>
            <person name="Zhekova A."/>
            <person name="Bao Y."/>
            <person name="Tripp R.A."/>
            <person name="Carding S.R."/>
            <person name="Yamauchi Y."/>
            <person name="Mayer U."/>
            <person name="Powell P.P."/>
            <person name="Stewart J.P."/>
            <person name="Wileman T."/>
        </authorList>
    </citation>
    <scope>FUNCTION</scope>
    <scope>MUTAGENESIS OF 231-PRO--PRO-607</scope>
</reference>
<reference evidence="25" key="20">
    <citation type="journal article" date="2024" name="J. Cell Biol.">
        <title>The V-ATPase-ATG16L1 axis recruits LRRK2 to facilitate the lysosomal stress response.</title>
        <authorList>
            <person name="Eguchi T."/>
            <person name="Sakurai M."/>
            <person name="Wang Y."/>
            <person name="Saito C."/>
            <person name="Yoshii G."/>
            <person name="Wileman T."/>
            <person name="Mizushima N."/>
            <person name="Kuwahara T."/>
            <person name="Iwatsubo T."/>
        </authorList>
    </citation>
    <scope>FUNCTION</scope>
    <scope>DOMAIN</scope>
</reference>
<reference evidence="27 28" key="21">
    <citation type="journal article" date="2021" name="Autophagy">
        <title>RAB33B recruits the ATG16L1 complex to the phagophore via a noncanonical RAB binding protein.</title>
        <authorList>
            <person name="Pantoom S."/>
            <person name="Konstantinidis G."/>
            <person name="Voss S."/>
            <person name="Han H."/>
            <person name="Hofnagel O."/>
            <person name="Li Z."/>
            <person name="Wu Y.W."/>
        </authorList>
    </citation>
    <scope>X-RAY CRYSTALLOGRAPHY (2.40 ANGSTROMS) OF 141-265</scope>
    <scope>INTERACTION WITH RAB33B</scope>
</reference>
<feature type="chain" id="PRO_0000050849" description="Autophagy-related protein 16-1">
    <location>
        <begin position="1"/>
        <end position="607"/>
    </location>
</feature>
<feature type="repeat" description="WD 1" evidence="3">
    <location>
        <begin position="320"/>
        <end position="359"/>
    </location>
</feature>
<feature type="repeat" description="WD 2" evidence="3">
    <location>
        <begin position="364"/>
        <end position="403"/>
    </location>
</feature>
<feature type="repeat" description="WD 3" evidence="3">
    <location>
        <begin position="406"/>
        <end position="445"/>
    </location>
</feature>
<feature type="repeat" description="WD 4" evidence="3">
    <location>
        <begin position="447"/>
        <end position="484"/>
    </location>
</feature>
<feature type="repeat" description="WD 5" evidence="3">
    <location>
        <begin position="486"/>
        <end position="525"/>
    </location>
</feature>
<feature type="repeat" description="WD 6" evidence="3">
    <location>
        <begin position="532"/>
        <end position="573"/>
    </location>
</feature>
<feature type="repeat" description="WD 7" evidence="3">
    <location>
        <begin position="575"/>
        <end position="607"/>
    </location>
</feature>
<feature type="region of interest" description="Interaction with ATG5" evidence="1">
    <location>
        <begin position="13"/>
        <end position="43"/>
    </location>
</feature>
<feature type="region of interest" description="WIPI2-binding" evidence="1">
    <location>
        <begin position="207"/>
        <end position="230"/>
    </location>
</feature>
<feature type="region of interest" description="RB1CC1-binding" evidence="10">
    <location>
        <begin position="230"/>
        <end position="242"/>
    </location>
</feature>
<feature type="coiled-coil region" evidence="2">
    <location>
        <begin position="79"/>
        <end position="230"/>
    </location>
</feature>
<feature type="short sequence motif" description="Caspase cleavage" evidence="13">
    <location>
        <begin position="296"/>
        <end position="299"/>
    </location>
</feature>
<feature type="modified residue" description="Phosphoserine" evidence="1">
    <location>
        <position position="139"/>
    </location>
</feature>
<feature type="modified residue" description="Phosphoserine" evidence="29">
    <location>
        <position position="269"/>
    </location>
</feature>
<feature type="modified residue" description="Phosphoserine" evidence="29">
    <location>
        <position position="287"/>
    </location>
</feature>
<feature type="splice variant" id="VSP_013391" description="In isoform 2 and isoform 5." evidence="20 21">
    <location>
        <begin position="266"/>
        <end position="284"/>
    </location>
</feature>
<feature type="splice variant" id="VSP_013392" description="In isoform 3 and isoform 4." evidence="20 22 23">
    <original>G</original>
    <variation>GLSESPLLGHHSSDAAR</variation>
    <location>
        <position position="284"/>
    </location>
</feature>
<feature type="splice variant" id="VSP_013393" description="In isoform 5." evidence="21">
    <original>C</original>
    <variation>CEEMQSLCVLMVFGFLSG</variation>
    <location>
        <position position="442"/>
    </location>
</feature>
<feature type="splice variant" id="VSP_013394" description="In isoform 4." evidence="23">
    <original>IKTVFAGSSC</original>
    <variation>EEMQSLCVFM</variation>
    <location>
        <begin position="443"/>
        <end position="452"/>
    </location>
</feature>
<feature type="splice variant" id="VSP_013395" description="In isoform 4." evidence="23">
    <location>
        <begin position="453"/>
        <end position="607"/>
    </location>
</feature>
<feature type="mutagenesis site" description="Impaired non-canonical autophagy, leading to susceptibility to influenza A virus (IAV) infection in mice." evidence="18">
    <location>
        <begin position="231"/>
        <end position="607"/>
    </location>
</feature>
<feature type="mutagenesis site" description="Prevents cleavage by activated CASP3." evidence="13">
    <original>D</original>
    <variation>E</variation>
    <location>
        <position position="299"/>
    </location>
</feature>
<feature type="mutagenesis site" description="No effect on the stability of the protein under normal conditions. Enhances cleavage and degradation mediated by activated CASP3 and CASP7. Results in reduced autophagy and defective clearance of intestinal pathogens. Increases secretion of pro-inflammatory cytokine IL1B and type I IFN." evidence="13 14">
    <original>T</original>
    <variation>A</variation>
    <location>
        <position position="300"/>
    </location>
</feature>
<feature type="sequence conflict" description="In Ref. 1; BAC55090/BAC55091/BAC55092 and 2; BAB23866." evidence="25" ref="1 2">
    <original>Q</original>
    <variation>H</variation>
    <location>
        <position position="83"/>
    </location>
</feature>
<feature type="helix" evidence="30">
    <location>
        <begin position="145"/>
        <end position="167"/>
    </location>
</feature>
<feature type="turn" evidence="30">
    <location>
        <begin position="168"/>
        <end position="171"/>
    </location>
</feature>
<feature type="helix" evidence="30">
    <location>
        <begin position="172"/>
        <end position="224"/>
    </location>
</feature>
<evidence type="ECO:0000250" key="1">
    <source>
        <dbReference type="UniProtKB" id="Q676U5"/>
    </source>
</evidence>
<evidence type="ECO:0000255" key="2"/>
<evidence type="ECO:0000255" key="3">
    <source>
        <dbReference type="PROSITE-ProRule" id="PRU00221"/>
    </source>
</evidence>
<evidence type="ECO:0000269" key="4">
    <source>
    </source>
</evidence>
<evidence type="ECO:0000269" key="5">
    <source>
    </source>
</evidence>
<evidence type="ECO:0000269" key="6">
    <source>
    </source>
</evidence>
<evidence type="ECO:0000269" key="7">
    <source>
    </source>
</evidence>
<evidence type="ECO:0000269" key="8">
    <source>
    </source>
</evidence>
<evidence type="ECO:0000269" key="9">
    <source>
    </source>
</evidence>
<evidence type="ECO:0000269" key="10">
    <source>
    </source>
</evidence>
<evidence type="ECO:0000269" key="11">
    <source>
    </source>
</evidence>
<evidence type="ECO:0000269" key="12">
    <source>
    </source>
</evidence>
<evidence type="ECO:0000269" key="13">
    <source>
    </source>
</evidence>
<evidence type="ECO:0000269" key="14">
    <source>
    </source>
</evidence>
<evidence type="ECO:0000269" key="15">
    <source>
    </source>
</evidence>
<evidence type="ECO:0000269" key="16">
    <source>
    </source>
</evidence>
<evidence type="ECO:0000269" key="17">
    <source>
    </source>
</evidence>
<evidence type="ECO:0000269" key="18">
    <source>
    </source>
</evidence>
<evidence type="ECO:0000269" key="19">
    <source>
    </source>
</evidence>
<evidence type="ECO:0000303" key="20">
    <source>
    </source>
</evidence>
<evidence type="ECO:0000303" key="21">
    <source>
    </source>
</evidence>
<evidence type="ECO:0000303" key="22">
    <source>
    </source>
</evidence>
<evidence type="ECO:0000303" key="23">
    <source>
    </source>
</evidence>
<evidence type="ECO:0000303" key="24">
    <source>
    </source>
</evidence>
<evidence type="ECO:0000305" key="25"/>
<evidence type="ECO:0000312" key="26">
    <source>
        <dbReference type="MGI" id="MGI:1924290"/>
    </source>
</evidence>
<evidence type="ECO:0007744" key="27">
    <source>
        <dbReference type="PDB" id="6Y09"/>
    </source>
</evidence>
<evidence type="ECO:0007744" key="28">
    <source>
        <dbReference type="PDB" id="6ZAY"/>
    </source>
</evidence>
<evidence type="ECO:0007744" key="29">
    <source>
    </source>
</evidence>
<evidence type="ECO:0007829" key="30">
    <source>
        <dbReference type="PDB" id="6Y09"/>
    </source>
</evidence>
<proteinExistence type="evidence at protein level"/>
<dbReference type="EMBL" id="AB087879">
    <property type="protein sequence ID" value="BAC55090.1"/>
    <property type="molecule type" value="mRNA"/>
</dbReference>
<dbReference type="EMBL" id="AB087880">
    <property type="protein sequence ID" value="BAC55091.1"/>
    <property type="molecule type" value="mRNA"/>
</dbReference>
<dbReference type="EMBL" id="AB087881">
    <property type="protein sequence ID" value="BAC55092.1"/>
    <property type="molecule type" value="mRNA"/>
</dbReference>
<dbReference type="EMBL" id="AK005181">
    <property type="protein sequence ID" value="BAB23866.1"/>
    <property type="molecule type" value="mRNA"/>
</dbReference>
<dbReference type="EMBL" id="AK030983">
    <property type="protein sequence ID" value="BAC27201.1"/>
    <property type="molecule type" value="mRNA"/>
</dbReference>
<dbReference type="EMBL" id="AK131120">
    <property type="protein sequence ID" value="BAD21370.1"/>
    <property type="status" value="ALT_INIT"/>
    <property type="molecule type" value="Transcribed_RNA"/>
</dbReference>
<dbReference type="EMBL" id="BC049122">
    <property type="protein sequence ID" value="AAH49122.1"/>
    <property type="molecule type" value="mRNA"/>
</dbReference>
<dbReference type="CCDS" id="CCDS15136.1">
    <molecule id="Q8C0J2-1"/>
</dbReference>
<dbReference type="CCDS" id="CCDS56637.1">
    <molecule id="Q8C0J2-3"/>
</dbReference>
<dbReference type="CCDS" id="CCDS56638.1">
    <molecule id="Q8C0J2-2"/>
</dbReference>
<dbReference type="RefSeq" id="NP_001192320.1">
    <molecule id="Q8C0J2-3"/>
    <property type="nucleotide sequence ID" value="NM_001205391.1"/>
</dbReference>
<dbReference type="RefSeq" id="NP_001192321.1">
    <molecule id="Q8C0J2-2"/>
    <property type="nucleotide sequence ID" value="NM_001205392.1"/>
</dbReference>
<dbReference type="RefSeq" id="NP_084122.2">
    <molecule id="Q8C0J2-1"/>
    <property type="nucleotide sequence ID" value="NM_029846.4"/>
</dbReference>
<dbReference type="PDB" id="6SUR">
    <property type="method" value="X-ray"/>
    <property type="resolution" value="3.47 A"/>
    <property type="chains" value="I/J/K/L/M/N=154-210"/>
</dbReference>
<dbReference type="PDB" id="6Y09">
    <property type="method" value="X-ray"/>
    <property type="resolution" value="2.40 A"/>
    <property type="chains" value="C/D=141-265"/>
</dbReference>
<dbReference type="PDB" id="6ZAY">
    <property type="method" value="X-ray"/>
    <property type="resolution" value="2.40 A"/>
    <property type="chains" value="C/D=141-265"/>
</dbReference>
<dbReference type="PDBsum" id="6SUR"/>
<dbReference type="PDBsum" id="6Y09"/>
<dbReference type="PDBsum" id="6ZAY"/>
<dbReference type="SMR" id="Q8C0J2"/>
<dbReference type="BioGRID" id="218476">
    <property type="interactions" value="681"/>
</dbReference>
<dbReference type="ComplexPortal" id="CPX-328">
    <property type="entry name" value="Atg12-Atg5-Atg16l1 complex"/>
</dbReference>
<dbReference type="CORUM" id="Q8C0J2"/>
<dbReference type="DIP" id="DIP-31966N"/>
<dbReference type="FunCoup" id="Q8C0J2">
    <property type="interactions" value="4260"/>
</dbReference>
<dbReference type="IntAct" id="Q8C0J2">
    <property type="interactions" value="14"/>
</dbReference>
<dbReference type="MINT" id="Q8C0J2"/>
<dbReference type="STRING" id="10090.ENSMUSP00000108815"/>
<dbReference type="GlyGen" id="Q8C0J2">
    <property type="glycosylation" value="1 site, 1 O-linked glycan (1 site)"/>
</dbReference>
<dbReference type="iPTMnet" id="Q8C0J2"/>
<dbReference type="PhosphoSitePlus" id="Q8C0J2"/>
<dbReference type="REPRODUCTION-2DPAGE" id="Q8C0J2"/>
<dbReference type="jPOST" id="Q8C0J2"/>
<dbReference type="PaxDb" id="10090-ENSMUSP00000027512"/>
<dbReference type="PeptideAtlas" id="Q8C0J2"/>
<dbReference type="ProteomicsDB" id="286000">
    <molecule id="Q8C0J2-1"/>
</dbReference>
<dbReference type="ProteomicsDB" id="286001">
    <molecule id="Q8C0J2-2"/>
</dbReference>
<dbReference type="ProteomicsDB" id="286002">
    <molecule id="Q8C0J2-3"/>
</dbReference>
<dbReference type="ProteomicsDB" id="286003">
    <molecule id="Q8C0J2-4"/>
</dbReference>
<dbReference type="ProteomicsDB" id="286004">
    <molecule id="Q8C0J2-5"/>
</dbReference>
<dbReference type="Pumba" id="Q8C0J2"/>
<dbReference type="Antibodypedia" id="1969">
    <property type="antibodies" value="879 antibodies from 42 providers"/>
</dbReference>
<dbReference type="DNASU" id="77040"/>
<dbReference type="Ensembl" id="ENSMUST00000027512.13">
    <molecule id="Q8C0J2-1"/>
    <property type="protein sequence ID" value="ENSMUSP00000027512.7"/>
    <property type="gene ID" value="ENSMUSG00000026289.16"/>
</dbReference>
<dbReference type="Ensembl" id="ENSMUST00000113186.8">
    <molecule id="Q8C0J2-2"/>
    <property type="protein sequence ID" value="ENSMUSP00000108811.2"/>
    <property type="gene ID" value="ENSMUSG00000026289.16"/>
</dbReference>
<dbReference type="Ensembl" id="ENSMUST00000113190.3">
    <molecule id="Q8C0J2-3"/>
    <property type="protein sequence ID" value="ENSMUSP00000108815.3"/>
    <property type="gene ID" value="ENSMUSG00000026289.16"/>
</dbReference>
<dbReference type="GeneID" id="77040"/>
<dbReference type="KEGG" id="mmu:77040"/>
<dbReference type="UCSC" id="uc007bxl.2">
    <molecule id="Q8C0J2-1"/>
    <property type="organism name" value="mouse"/>
</dbReference>
<dbReference type="AGR" id="MGI:1924290"/>
<dbReference type="CTD" id="55054"/>
<dbReference type="MGI" id="MGI:1924290">
    <property type="gene designation" value="Atg16l1"/>
</dbReference>
<dbReference type="VEuPathDB" id="HostDB:ENSMUSG00000026289"/>
<dbReference type="eggNOG" id="KOG0288">
    <property type="taxonomic scope" value="Eukaryota"/>
</dbReference>
<dbReference type="GeneTree" id="ENSGT00940000153936"/>
<dbReference type="HOGENOM" id="CLU_000288_57_10_1"/>
<dbReference type="InParanoid" id="Q8C0J2"/>
<dbReference type="OMA" id="WGRPCIS"/>
<dbReference type="OrthoDB" id="6262491at2759"/>
<dbReference type="PhylomeDB" id="Q8C0J2"/>
<dbReference type="TreeFam" id="TF315541"/>
<dbReference type="Reactome" id="R-MMU-1632852">
    <property type="pathway name" value="Macroautophagy"/>
</dbReference>
<dbReference type="BioGRID-ORCS" id="77040">
    <property type="hits" value="16 hits in 81 CRISPR screens"/>
</dbReference>
<dbReference type="ChiTaRS" id="Atg16l1">
    <property type="organism name" value="mouse"/>
</dbReference>
<dbReference type="PRO" id="PR:Q8C0J2"/>
<dbReference type="Proteomes" id="UP000000589">
    <property type="component" value="Chromosome 1"/>
</dbReference>
<dbReference type="RNAct" id="Q8C0J2">
    <property type="molecule type" value="protein"/>
</dbReference>
<dbReference type="Bgee" id="ENSMUSG00000026289">
    <property type="expression patterns" value="Expressed in retinal neural layer and 253 other cell types or tissues"/>
</dbReference>
<dbReference type="ExpressionAtlas" id="Q8C0J2">
    <property type="expression patterns" value="baseline and differential"/>
</dbReference>
<dbReference type="GO" id="GO:0034274">
    <property type="term" value="C:Atg12-Atg5-Atg16 complex"/>
    <property type="evidence" value="ECO:0000314"/>
    <property type="project" value="ComplexPortal"/>
</dbReference>
<dbReference type="GO" id="GO:0005776">
    <property type="term" value="C:autophagosome"/>
    <property type="evidence" value="ECO:0000314"/>
    <property type="project" value="MGI"/>
</dbReference>
<dbReference type="GO" id="GO:0000421">
    <property type="term" value="C:autophagosome membrane"/>
    <property type="evidence" value="ECO:0000314"/>
    <property type="project" value="MGI"/>
</dbReference>
<dbReference type="GO" id="GO:0030424">
    <property type="term" value="C:axon"/>
    <property type="evidence" value="ECO:0007669"/>
    <property type="project" value="GOC"/>
</dbReference>
<dbReference type="GO" id="GO:0005930">
    <property type="term" value="C:axoneme"/>
    <property type="evidence" value="ECO:0000314"/>
    <property type="project" value="UniProtKB"/>
</dbReference>
<dbReference type="GO" id="GO:0005737">
    <property type="term" value="C:cytoplasm"/>
    <property type="evidence" value="ECO:0000314"/>
    <property type="project" value="UniProtKB"/>
</dbReference>
<dbReference type="GO" id="GO:0005829">
    <property type="term" value="C:cytosol"/>
    <property type="evidence" value="ECO:0000304"/>
    <property type="project" value="Reactome"/>
</dbReference>
<dbReference type="GO" id="GO:0036020">
    <property type="term" value="C:endolysosome membrane"/>
    <property type="evidence" value="ECO:0000250"/>
    <property type="project" value="UniProtKB"/>
</dbReference>
<dbReference type="GO" id="GO:0098978">
    <property type="term" value="C:glutamatergic synapse"/>
    <property type="evidence" value="ECO:0000314"/>
    <property type="project" value="SynGO"/>
</dbReference>
<dbReference type="GO" id="GO:0034045">
    <property type="term" value="C:phagophore assembly site membrane"/>
    <property type="evidence" value="ECO:0000314"/>
    <property type="project" value="ComplexPortal"/>
</dbReference>
<dbReference type="GO" id="GO:0097225">
    <property type="term" value="C:sperm midpiece"/>
    <property type="evidence" value="ECO:0000314"/>
    <property type="project" value="UniProtKB"/>
</dbReference>
<dbReference type="GO" id="GO:0120095">
    <property type="term" value="C:vacuole-isolation membrane contact site"/>
    <property type="evidence" value="ECO:0000250"/>
    <property type="project" value="UniProtKB"/>
</dbReference>
<dbReference type="GO" id="GO:0051020">
    <property type="term" value="F:GTPase binding"/>
    <property type="evidence" value="ECO:0007669"/>
    <property type="project" value="Ensembl"/>
</dbReference>
<dbReference type="GO" id="GO:0042802">
    <property type="term" value="F:identical protein binding"/>
    <property type="evidence" value="ECO:0000353"/>
    <property type="project" value="IntAct"/>
</dbReference>
<dbReference type="GO" id="GO:0043495">
    <property type="term" value="F:protein-membrane adaptor activity"/>
    <property type="evidence" value="ECO:0007669"/>
    <property type="project" value="Ensembl"/>
</dbReference>
<dbReference type="GO" id="GO:0000045">
    <property type="term" value="P:autophagosome assembly"/>
    <property type="evidence" value="ECO:0000315"/>
    <property type="project" value="ComplexPortal"/>
</dbReference>
<dbReference type="GO" id="GO:0098930">
    <property type="term" value="P:axonal transport"/>
    <property type="evidence" value="ECO:0000314"/>
    <property type="project" value="SynGO"/>
</dbReference>
<dbReference type="GO" id="GO:0022038">
    <property type="term" value="P:corpus callosum development"/>
    <property type="evidence" value="ECO:0000315"/>
    <property type="project" value="MGI"/>
</dbReference>
<dbReference type="GO" id="GO:0051607">
    <property type="term" value="P:defense response to virus"/>
    <property type="evidence" value="ECO:0000315"/>
    <property type="project" value="UniProtKB"/>
</dbReference>
<dbReference type="GO" id="GO:0140059">
    <property type="term" value="P:dendrite arborization"/>
    <property type="evidence" value="ECO:0007669"/>
    <property type="project" value="Ensembl"/>
</dbReference>
<dbReference type="GO" id="GO:0021766">
    <property type="term" value="P:hippocampus development"/>
    <property type="evidence" value="ECO:0000315"/>
    <property type="project" value="MGI"/>
</dbReference>
<dbReference type="GO" id="GO:0016236">
    <property type="term" value="P:macroautophagy"/>
    <property type="evidence" value="ECO:0000315"/>
    <property type="project" value="ComplexPortal"/>
</dbReference>
<dbReference type="GO" id="GO:0016237">
    <property type="term" value="P:microautophagy"/>
    <property type="evidence" value="ECO:0000315"/>
    <property type="project" value="UniProtKB"/>
</dbReference>
<dbReference type="GO" id="GO:1903860">
    <property type="term" value="P:negative regulation of dendrite extension"/>
    <property type="evidence" value="ECO:0007669"/>
    <property type="project" value="Ensembl"/>
</dbReference>
<dbReference type="GO" id="GO:0039689">
    <property type="term" value="P:negative stranded viral RNA replication"/>
    <property type="evidence" value="ECO:0000315"/>
    <property type="project" value="MGI"/>
</dbReference>
<dbReference type="GO" id="GO:0010508">
    <property type="term" value="P:positive regulation of autophagy"/>
    <property type="evidence" value="ECO:0000314"/>
    <property type="project" value="ARUK-UCL"/>
</dbReference>
<dbReference type="GO" id="GO:0034497">
    <property type="term" value="P:protein localization to phagophore assembly site"/>
    <property type="evidence" value="ECO:0000353"/>
    <property type="project" value="MGI"/>
</dbReference>
<dbReference type="GO" id="GO:0015031">
    <property type="term" value="P:protein transport"/>
    <property type="evidence" value="ECO:0007669"/>
    <property type="project" value="UniProtKB-KW"/>
</dbReference>
<dbReference type="GO" id="GO:0098792">
    <property type="term" value="P:xenophagy"/>
    <property type="evidence" value="ECO:0000353"/>
    <property type="project" value="MGI"/>
</dbReference>
<dbReference type="CDD" id="cd22887">
    <property type="entry name" value="Atg16_CCD"/>
    <property type="match status" value="1"/>
</dbReference>
<dbReference type="CDD" id="cd00200">
    <property type="entry name" value="WD40"/>
    <property type="match status" value="1"/>
</dbReference>
<dbReference type="FunFam" id="2.130.10.10:FF:000337">
    <property type="entry name" value="ATG16 autophagy related 16-like 1 (S. cerevisiae)"/>
    <property type="match status" value="1"/>
</dbReference>
<dbReference type="FunFam" id="2.130.10.10:FF:000607">
    <property type="entry name" value="Autophagy related 16 like 1"/>
    <property type="match status" value="1"/>
</dbReference>
<dbReference type="FunFam" id="1.20.5.170:FF:000039">
    <property type="entry name" value="Autophagy-related protein 16-1 isoform 1"/>
    <property type="match status" value="1"/>
</dbReference>
<dbReference type="FunFam" id="2.130.10.10:FF:000155">
    <property type="entry name" value="Autophagy-related protein 16-1 isoform 1"/>
    <property type="match status" value="1"/>
</dbReference>
<dbReference type="Gene3D" id="1.20.5.170">
    <property type="match status" value="1"/>
</dbReference>
<dbReference type="Gene3D" id="2.130.10.10">
    <property type="entry name" value="YVTN repeat-like/Quinoprotein amine dehydrogenase"/>
    <property type="match status" value="2"/>
</dbReference>
<dbReference type="InterPro" id="IPR045160">
    <property type="entry name" value="ATG16"/>
</dbReference>
<dbReference type="InterPro" id="IPR013923">
    <property type="entry name" value="Autophagy-rel_prot_16_dom"/>
</dbReference>
<dbReference type="InterPro" id="IPR020472">
    <property type="entry name" value="G-protein_beta_WD-40_rep"/>
</dbReference>
<dbReference type="InterPro" id="IPR015943">
    <property type="entry name" value="WD40/YVTN_repeat-like_dom_sf"/>
</dbReference>
<dbReference type="InterPro" id="IPR019775">
    <property type="entry name" value="WD40_repeat_CS"/>
</dbReference>
<dbReference type="InterPro" id="IPR036322">
    <property type="entry name" value="WD40_repeat_dom_sf"/>
</dbReference>
<dbReference type="InterPro" id="IPR001680">
    <property type="entry name" value="WD40_rpt"/>
</dbReference>
<dbReference type="PANTHER" id="PTHR19878">
    <property type="entry name" value="AUTOPHAGY PROTEIN 16-LIKE"/>
    <property type="match status" value="1"/>
</dbReference>
<dbReference type="PANTHER" id="PTHR19878:SF6">
    <property type="entry name" value="AUTOPHAGY-RELATED PROTEIN 16-1"/>
    <property type="match status" value="1"/>
</dbReference>
<dbReference type="Pfam" id="PF08614">
    <property type="entry name" value="ATG16"/>
    <property type="match status" value="1"/>
</dbReference>
<dbReference type="Pfam" id="PF00400">
    <property type="entry name" value="WD40"/>
    <property type="match status" value="5"/>
</dbReference>
<dbReference type="PRINTS" id="PR00320">
    <property type="entry name" value="GPROTEINBRPT"/>
</dbReference>
<dbReference type="SMART" id="SM00320">
    <property type="entry name" value="WD40"/>
    <property type="match status" value="7"/>
</dbReference>
<dbReference type="SUPFAM" id="SSF50978">
    <property type="entry name" value="WD40 repeat-like"/>
    <property type="match status" value="1"/>
</dbReference>
<dbReference type="PROSITE" id="PS00678">
    <property type="entry name" value="WD_REPEATS_1"/>
    <property type="match status" value="3"/>
</dbReference>
<dbReference type="PROSITE" id="PS50082">
    <property type="entry name" value="WD_REPEATS_2"/>
    <property type="match status" value="6"/>
</dbReference>
<dbReference type="PROSITE" id="PS50294">
    <property type="entry name" value="WD_REPEATS_REGION"/>
    <property type="match status" value="1"/>
</dbReference>
<name>A16L1_MOUSE</name>
<gene>
    <name evidence="24 26" type="primary">Atg16l1</name>
    <name evidence="20" type="synonym">Apg16l</name>
</gene>
<organism>
    <name type="scientific">Mus musculus</name>
    <name type="common">Mouse</name>
    <dbReference type="NCBI Taxonomy" id="10090"/>
    <lineage>
        <taxon>Eukaryota</taxon>
        <taxon>Metazoa</taxon>
        <taxon>Chordata</taxon>
        <taxon>Craniata</taxon>
        <taxon>Vertebrata</taxon>
        <taxon>Euteleostomi</taxon>
        <taxon>Mammalia</taxon>
        <taxon>Eutheria</taxon>
        <taxon>Euarchontoglires</taxon>
        <taxon>Glires</taxon>
        <taxon>Rodentia</taxon>
        <taxon>Myomorpha</taxon>
        <taxon>Muroidea</taxon>
        <taxon>Muridae</taxon>
        <taxon>Murinae</taxon>
        <taxon>Mus</taxon>
        <taxon>Mus</taxon>
    </lineage>
</organism>
<sequence length="607" mass="68172">MSSGLRAADFPRWKRHIAEELRRRDRLQRQAFEEIILQYTKLLEKSDLHSVLTQKLQAEKHDMPNRHEISPGHDGAWNDSQLQEMAQLRIKHQEELTELHKKRGELAQLVIDLNNQMQQKDKEIQMNEAKISEYLQTISDLETNCLDLRTKLQDLEVANQTLKDEYDALQITFTALEEKLRKTTEENQELVTRWMAEKAQEANRLNAENEKDSRRRQARLQKELAEAAKEPLPVEQDDDIEVIVDETSDHTEETSPVRAVSRAATKRLSQPAGGLLDSITNIFGRRSVSSIPVPQDIMDTHPASGKDVRVPTTASYVFDAHDGEVNAVQFSPGSRLLATGGMDRRVKLWEAFGDKCEFKGSLSGSNAGITSIEFDSAGAYLLAASNDFASRIWTVDDYRLRHTLTGHSGKVLSAKFLLDNARIVSGSHDRTLKLWDLRSKVCIKTVFAGSSCNDIVCTEQCVMSGHFDKKIRFWDIRSESVVREMELLGKITALDLNPERTELLSCSRDDLLKVIDLRTNAVKQTFSAPGFKCGSDWTRVVFSPDGSYVAAGSAEGSLYVWSVLTGKVEKVLSKQHSSSINAVAWAPSGLHVVSVDKGSRAVLWAQP</sequence>
<protein>
    <recommendedName>
        <fullName evidence="25">Autophagy-related protein 16-1</fullName>
    </recommendedName>
    <alternativeName>
        <fullName evidence="24">APG16-like 1</fullName>
    </alternativeName>
</protein>
<accession>Q8C0J2</accession>
<accession>Q6KAT7</accession>
<accession>Q80U97</accession>
<accession>Q80U98</accession>
<accession>Q80U99</accession>
<accession>Q80Y53</accession>
<accession>Q9DB63</accession>